<gene>
    <name evidence="1" type="primary">atpA</name>
    <name type="ordered locus">Ldb0709</name>
</gene>
<reference key="1">
    <citation type="journal article" date="2006" name="Proc. Natl. Acad. Sci. U.S.A.">
        <title>The complete genome sequence of Lactobacillus bulgaricus reveals extensive and ongoing reductive evolution.</title>
        <authorList>
            <person name="van de Guchte M."/>
            <person name="Penaud S."/>
            <person name="Grimaldi C."/>
            <person name="Barbe V."/>
            <person name="Bryson K."/>
            <person name="Nicolas P."/>
            <person name="Robert C."/>
            <person name="Oztas S."/>
            <person name="Mangenot S."/>
            <person name="Couloux A."/>
            <person name="Loux V."/>
            <person name="Dervyn R."/>
            <person name="Bossy R."/>
            <person name="Bolotin A."/>
            <person name="Batto J.-M."/>
            <person name="Walunas T."/>
            <person name="Gibrat J.-F."/>
            <person name="Bessieres P."/>
            <person name="Weissenbach J."/>
            <person name="Ehrlich S.D."/>
            <person name="Maguin E."/>
        </authorList>
    </citation>
    <scope>NUCLEOTIDE SEQUENCE [LARGE SCALE GENOMIC DNA]</scope>
    <source>
        <strain>ATCC 11842 / DSM 20081 / BCRC 10696 / JCM 1002 / NBRC 13953 / NCIMB 11778 / NCTC 12712 / WDCM 00102 / Lb 14</strain>
    </source>
</reference>
<sequence>MSIKAEEISSLIKQQLEHYDDKLDIEEVGVVTYVGDGIARAHGLNNVLSSELLQFDNGAYGIAQNLESNDVGIIILGKFDDIREGDRVKRTGRIMEVPVGDALIGRVVNPLGQPVDGLGEIKTDKTRPIESKAPGVMQRQSVNQPLQTGIKAIDALVPIGRGQRELVIGDRKTGKTSLAIDTILNQKGQDVICIYVSIGQKESTVRAQVETLKKLGAMDYTIVVEAGPSEPAPMLYIAPYSGIAMGEEFMYAGKDVLVVFDDLSKQAVAYRELSLLLRRPPGREAYPGDVFYLHSRLLERSAKLSKELGGGSLTALPVIQTEAGDISAYIPTNVISITDGQIFLQSDMFFSGTRPAIDAGASVSRVGGAAQIPAMKKVAGTLRTDLASYRELESFAQFGSDLDQATQAKLARGRRTVEVLKQPLHKPVAVEKQVVLLYALTHGFMDAVPVDDIARFEQELYTDFDANHADLLAEIKSTGKLPDENKLQEALQQFASSFSSSNK</sequence>
<name>ATPA_LACDA</name>
<evidence type="ECO:0000255" key="1">
    <source>
        <dbReference type="HAMAP-Rule" id="MF_01346"/>
    </source>
</evidence>
<dbReference type="EC" id="7.1.2.2" evidence="1"/>
<dbReference type="EMBL" id="CR954253">
    <property type="protein sequence ID" value="CAI97536.1"/>
    <property type="molecule type" value="Genomic_DNA"/>
</dbReference>
<dbReference type="RefSeq" id="WP_011543761.1">
    <property type="nucleotide sequence ID" value="NC_008054.1"/>
</dbReference>
<dbReference type="SMR" id="Q1GAW7"/>
<dbReference type="STRING" id="390333.Ldb0709"/>
<dbReference type="KEGG" id="ldb:Ldb0709"/>
<dbReference type="eggNOG" id="COG0056">
    <property type="taxonomic scope" value="Bacteria"/>
</dbReference>
<dbReference type="HOGENOM" id="CLU_010091_2_1_9"/>
<dbReference type="BioCyc" id="LDEL390333:LDB_RS03085-MONOMER"/>
<dbReference type="Proteomes" id="UP000001259">
    <property type="component" value="Chromosome"/>
</dbReference>
<dbReference type="GO" id="GO:0005886">
    <property type="term" value="C:plasma membrane"/>
    <property type="evidence" value="ECO:0007669"/>
    <property type="project" value="UniProtKB-SubCell"/>
</dbReference>
<dbReference type="GO" id="GO:0045259">
    <property type="term" value="C:proton-transporting ATP synthase complex"/>
    <property type="evidence" value="ECO:0007669"/>
    <property type="project" value="UniProtKB-KW"/>
</dbReference>
<dbReference type="GO" id="GO:0043531">
    <property type="term" value="F:ADP binding"/>
    <property type="evidence" value="ECO:0007669"/>
    <property type="project" value="TreeGrafter"/>
</dbReference>
<dbReference type="GO" id="GO:0005524">
    <property type="term" value="F:ATP binding"/>
    <property type="evidence" value="ECO:0007669"/>
    <property type="project" value="UniProtKB-UniRule"/>
</dbReference>
<dbReference type="GO" id="GO:0046933">
    <property type="term" value="F:proton-transporting ATP synthase activity, rotational mechanism"/>
    <property type="evidence" value="ECO:0007669"/>
    <property type="project" value="UniProtKB-UniRule"/>
</dbReference>
<dbReference type="CDD" id="cd18113">
    <property type="entry name" value="ATP-synt_F1_alpha_C"/>
    <property type="match status" value="1"/>
</dbReference>
<dbReference type="CDD" id="cd18116">
    <property type="entry name" value="ATP-synt_F1_alpha_N"/>
    <property type="match status" value="1"/>
</dbReference>
<dbReference type="CDD" id="cd01132">
    <property type="entry name" value="F1-ATPase_alpha_CD"/>
    <property type="match status" value="1"/>
</dbReference>
<dbReference type="FunFam" id="1.20.150.20:FF:000001">
    <property type="entry name" value="ATP synthase subunit alpha"/>
    <property type="match status" value="1"/>
</dbReference>
<dbReference type="FunFam" id="2.40.30.20:FF:000001">
    <property type="entry name" value="ATP synthase subunit alpha"/>
    <property type="match status" value="1"/>
</dbReference>
<dbReference type="FunFam" id="3.40.50.300:FF:000002">
    <property type="entry name" value="ATP synthase subunit alpha"/>
    <property type="match status" value="1"/>
</dbReference>
<dbReference type="Gene3D" id="2.40.30.20">
    <property type="match status" value="1"/>
</dbReference>
<dbReference type="Gene3D" id="1.20.150.20">
    <property type="entry name" value="ATP synthase alpha/beta chain, C-terminal domain"/>
    <property type="match status" value="1"/>
</dbReference>
<dbReference type="Gene3D" id="3.40.50.300">
    <property type="entry name" value="P-loop containing nucleotide triphosphate hydrolases"/>
    <property type="match status" value="1"/>
</dbReference>
<dbReference type="HAMAP" id="MF_01346">
    <property type="entry name" value="ATP_synth_alpha_bact"/>
    <property type="match status" value="1"/>
</dbReference>
<dbReference type="InterPro" id="IPR023366">
    <property type="entry name" value="ATP_synth_asu-like_sf"/>
</dbReference>
<dbReference type="InterPro" id="IPR000793">
    <property type="entry name" value="ATP_synth_asu_C"/>
</dbReference>
<dbReference type="InterPro" id="IPR038376">
    <property type="entry name" value="ATP_synth_asu_C_sf"/>
</dbReference>
<dbReference type="InterPro" id="IPR033732">
    <property type="entry name" value="ATP_synth_F1_a_nt-bd_dom"/>
</dbReference>
<dbReference type="InterPro" id="IPR005294">
    <property type="entry name" value="ATP_synth_F1_asu"/>
</dbReference>
<dbReference type="InterPro" id="IPR020003">
    <property type="entry name" value="ATPase_a/bsu_AS"/>
</dbReference>
<dbReference type="InterPro" id="IPR004100">
    <property type="entry name" value="ATPase_F1/V1/A1_a/bsu_N"/>
</dbReference>
<dbReference type="InterPro" id="IPR036121">
    <property type="entry name" value="ATPase_F1/V1/A1_a/bsu_N_sf"/>
</dbReference>
<dbReference type="InterPro" id="IPR000194">
    <property type="entry name" value="ATPase_F1/V1/A1_a/bsu_nucl-bd"/>
</dbReference>
<dbReference type="InterPro" id="IPR027417">
    <property type="entry name" value="P-loop_NTPase"/>
</dbReference>
<dbReference type="NCBIfam" id="TIGR00962">
    <property type="entry name" value="atpA"/>
    <property type="match status" value="1"/>
</dbReference>
<dbReference type="NCBIfam" id="NF009884">
    <property type="entry name" value="PRK13343.1"/>
    <property type="match status" value="1"/>
</dbReference>
<dbReference type="PANTHER" id="PTHR48082">
    <property type="entry name" value="ATP SYNTHASE SUBUNIT ALPHA, MITOCHONDRIAL"/>
    <property type="match status" value="1"/>
</dbReference>
<dbReference type="PANTHER" id="PTHR48082:SF2">
    <property type="entry name" value="ATP SYNTHASE SUBUNIT ALPHA, MITOCHONDRIAL"/>
    <property type="match status" value="1"/>
</dbReference>
<dbReference type="Pfam" id="PF00006">
    <property type="entry name" value="ATP-synt_ab"/>
    <property type="match status" value="1"/>
</dbReference>
<dbReference type="Pfam" id="PF00306">
    <property type="entry name" value="ATP-synt_ab_C"/>
    <property type="match status" value="1"/>
</dbReference>
<dbReference type="Pfam" id="PF02874">
    <property type="entry name" value="ATP-synt_ab_N"/>
    <property type="match status" value="1"/>
</dbReference>
<dbReference type="PIRSF" id="PIRSF039088">
    <property type="entry name" value="F_ATPase_subunit_alpha"/>
    <property type="match status" value="1"/>
</dbReference>
<dbReference type="SUPFAM" id="SSF47917">
    <property type="entry name" value="C-terminal domain of alpha and beta subunits of F1 ATP synthase"/>
    <property type="match status" value="1"/>
</dbReference>
<dbReference type="SUPFAM" id="SSF50615">
    <property type="entry name" value="N-terminal domain of alpha and beta subunits of F1 ATP synthase"/>
    <property type="match status" value="1"/>
</dbReference>
<dbReference type="SUPFAM" id="SSF52540">
    <property type="entry name" value="P-loop containing nucleoside triphosphate hydrolases"/>
    <property type="match status" value="1"/>
</dbReference>
<dbReference type="PROSITE" id="PS00152">
    <property type="entry name" value="ATPASE_ALPHA_BETA"/>
    <property type="match status" value="1"/>
</dbReference>
<accession>Q1GAW7</accession>
<feature type="chain" id="PRO_0000256093" description="ATP synthase subunit alpha">
    <location>
        <begin position="1"/>
        <end position="503"/>
    </location>
</feature>
<feature type="binding site" evidence="1">
    <location>
        <begin position="169"/>
        <end position="176"/>
    </location>
    <ligand>
        <name>ATP</name>
        <dbReference type="ChEBI" id="CHEBI:30616"/>
    </ligand>
</feature>
<feature type="site" description="Required for activity" evidence="1">
    <location>
        <position position="362"/>
    </location>
</feature>
<comment type="function">
    <text evidence="1">Produces ATP from ADP in the presence of a proton gradient across the membrane. The alpha chain is a regulatory subunit.</text>
</comment>
<comment type="catalytic activity">
    <reaction evidence="1">
        <text>ATP + H2O + 4 H(+)(in) = ADP + phosphate + 5 H(+)(out)</text>
        <dbReference type="Rhea" id="RHEA:57720"/>
        <dbReference type="ChEBI" id="CHEBI:15377"/>
        <dbReference type="ChEBI" id="CHEBI:15378"/>
        <dbReference type="ChEBI" id="CHEBI:30616"/>
        <dbReference type="ChEBI" id="CHEBI:43474"/>
        <dbReference type="ChEBI" id="CHEBI:456216"/>
        <dbReference type="EC" id="7.1.2.2"/>
    </reaction>
</comment>
<comment type="subunit">
    <text evidence="1">F-type ATPases have 2 components, CF(1) - the catalytic core - and CF(0) - the membrane proton channel. CF(1) has five subunits: alpha(3), beta(3), gamma(1), delta(1), epsilon(1). CF(0) has three main subunits: a(1), b(2) and c(9-12). The alpha and beta chains form an alternating ring which encloses part of the gamma chain. CF(1) is attached to CF(0) by a central stalk formed by the gamma and epsilon chains, while a peripheral stalk is formed by the delta and b chains.</text>
</comment>
<comment type="subcellular location">
    <subcellularLocation>
        <location evidence="1">Cell membrane</location>
        <topology evidence="1">Peripheral membrane protein</topology>
    </subcellularLocation>
</comment>
<comment type="similarity">
    <text evidence="1">Belongs to the ATPase alpha/beta chains family.</text>
</comment>
<proteinExistence type="inferred from homology"/>
<keyword id="KW-0066">ATP synthesis</keyword>
<keyword id="KW-0067">ATP-binding</keyword>
<keyword id="KW-1003">Cell membrane</keyword>
<keyword id="KW-0139">CF(1)</keyword>
<keyword id="KW-0375">Hydrogen ion transport</keyword>
<keyword id="KW-0406">Ion transport</keyword>
<keyword id="KW-0472">Membrane</keyword>
<keyword id="KW-0547">Nucleotide-binding</keyword>
<keyword id="KW-1185">Reference proteome</keyword>
<keyword id="KW-1278">Translocase</keyword>
<keyword id="KW-0813">Transport</keyword>
<organism>
    <name type="scientific">Lactobacillus delbrueckii subsp. bulgaricus (strain ATCC 11842 / DSM 20081 / BCRC 10696 / JCM 1002 / NBRC 13953 / NCIMB 11778 / NCTC 12712 / WDCM 00102 / Lb 14)</name>
    <dbReference type="NCBI Taxonomy" id="390333"/>
    <lineage>
        <taxon>Bacteria</taxon>
        <taxon>Bacillati</taxon>
        <taxon>Bacillota</taxon>
        <taxon>Bacilli</taxon>
        <taxon>Lactobacillales</taxon>
        <taxon>Lactobacillaceae</taxon>
        <taxon>Lactobacillus</taxon>
    </lineage>
</organism>
<protein>
    <recommendedName>
        <fullName evidence="1">ATP synthase subunit alpha</fullName>
        <ecNumber evidence="1">7.1.2.2</ecNumber>
    </recommendedName>
    <alternativeName>
        <fullName evidence="1">ATP synthase F1 sector subunit alpha</fullName>
    </alternativeName>
    <alternativeName>
        <fullName evidence="1">F-ATPase subunit alpha</fullName>
    </alternativeName>
</protein>